<organism>
    <name type="scientific">Mycobacterium tuberculosis (strain ATCC 25618 / H37Rv)</name>
    <dbReference type="NCBI Taxonomy" id="83332"/>
    <lineage>
        <taxon>Bacteria</taxon>
        <taxon>Bacillati</taxon>
        <taxon>Actinomycetota</taxon>
        <taxon>Actinomycetes</taxon>
        <taxon>Mycobacteriales</taxon>
        <taxon>Mycobacteriaceae</taxon>
        <taxon>Mycobacterium</taxon>
        <taxon>Mycobacterium tuberculosis complex</taxon>
    </lineage>
</organism>
<comment type="function">
    <text evidence="1">Succinyl-CoA synthetase functions in the citric acid cycle (TCA), coupling the hydrolysis of succinyl-CoA to the synthesis of either ATP or GTP and thus represents the only step of substrate-level phosphorylation in the TCA. The alpha subunit of the enzyme binds the substrates coenzyme A and phosphate, while succinate binding and nucleotide specificity is provided by the beta subunit.</text>
</comment>
<comment type="catalytic activity">
    <reaction evidence="1">
        <text>succinate + ATP + CoA = succinyl-CoA + ADP + phosphate</text>
        <dbReference type="Rhea" id="RHEA:17661"/>
        <dbReference type="ChEBI" id="CHEBI:30031"/>
        <dbReference type="ChEBI" id="CHEBI:30616"/>
        <dbReference type="ChEBI" id="CHEBI:43474"/>
        <dbReference type="ChEBI" id="CHEBI:57287"/>
        <dbReference type="ChEBI" id="CHEBI:57292"/>
        <dbReference type="ChEBI" id="CHEBI:456216"/>
        <dbReference type="EC" id="6.2.1.5"/>
    </reaction>
    <physiologicalReaction direction="right-to-left" evidence="1">
        <dbReference type="Rhea" id="RHEA:17663"/>
    </physiologicalReaction>
</comment>
<comment type="catalytic activity">
    <reaction evidence="1">
        <text>GTP + succinate + CoA = succinyl-CoA + GDP + phosphate</text>
        <dbReference type="Rhea" id="RHEA:22120"/>
        <dbReference type="ChEBI" id="CHEBI:30031"/>
        <dbReference type="ChEBI" id="CHEBI:37565"/>
        <dbReference type="ChEBI" id="CHEBI:43474"/>
        <dbReference type="ChEBI" id="CHEBI:57287"/>
        <dbReference type="ChEBI" id="CHEBI:57292"/>
        <dbReference type="ChEBI" id="CHEBI:58189"/>
    </reaction>
    <physiologicalReaction direction="right-to-left" evidence="1">
        <dbReference type="Rhea" id="RHEA:22122"/>
    </physiologicalReaction>
</comment>
<comment type="pathway">
    <text evidence="1">Carbohydrate metabolism; tricarboxylic acid cycle; succinate from succinyl-CoA (ligase route): step 1/1.</text>
</comment>
<comment type="subunit">
    <text evidence="1">Heterotetramer of two alpha and two beta subunits.</text>
</comment>
<comment type="similarity">
    <text evidence="1">Belongs to the succinate/malate CoA ligase alpha subunit family.</text>
</comment>
<feature type="chain" id="PRO_0000102796" description="Succinate--CoA ligase [ADP-forming] subunit alpha">
    <location>
        <begin position="1"/>
        <end position="303"/>
    </location>
</feature>
<feature type="active site" description="Tele-phosphohistidine intermediate" evidence="1">
    <location>
        <position position="259"/>
    </location>
</feature>
<feature type="binding site" evidence="1">
    <location>
        <begin position="20"/>
        <end position="23"/>
    </location>
    <ligand>
        <name>CoA</name>
        <dbReference type="ChEBI" id="CHEBI:57287"/>
    </ligand>
</feature>
<feature type="binding site" evidence="1">
    <location>
        <position position="46"/>
    </location>
    <ligand>
        <name>CoA</name>
        <dbReference type="ChEBI" id="CHEBI:57287"/>
    </ligand>
</feature>
<feature type="binding site" evidence="1">
    <location>
        <begin position="108"/>
        <end position="110"/>
    </location>
    <ligand>
        <name>CoA</name>
        <dbReference type="ChEBI" id="CHEBI:57287"/>
    </ligand>
</feature>
<feature type="binding site" evidence="1">
    <location>
        <position position="173"/>
    </location>
    <ligand>
        <name>substrate</name>
        <note>ligand shared with subunit beta</note>
    </ligand>
</feature>
<proteinExistence type="evidence at protein level"/>
<evidence type="ECO:0000255" key="1">
    <source>
        <dbReference type="HAMAP-Rule" id="MF_01988"/>
    </source>
</evidence>
<protein>
    <recommendedName>
        <fullName evidence="1">Succinate--CoA ligase [ADP-forming] subunit alpha</fullName>
        <ecNumber evidence="1">6.2.1.5</ecNumber>
    </recommendedName>
    <alternativeName>
        <fullName evidence="1">Succinyl-CoA synthetase subunit alpha</fullName>
        <shortName evidence="1">SCS-alpha</shortName>
    </alternativeName>
</protein>
<accession>P9WGC7</accession>
<accession>L0T598</accession>
<accession>P71558</accession>
<name>SUCD_MYCTU</name>
<reference key="1">
    <citation type="journal article" date="1998" name="Nature">
        <title>Deciphering the biology of Mycobacterium tuberculosis from the complete genome sequence.</title>
        <authorList>
            <person name="Cole S.T."/>
            <person name="Brosch R."/>
            <person name="Parkhill J."/>
            <person name="Garnier T."/>
            <person name="Churcher C.M."/>
            <person name="Harris D.E."/>
            <person name="Gordon S.V."/>
            <person name="Eiglmeier K."/>
            <person name="Gas S."/>
            <person name="Barry C.E. III"/>
            <person name="Tekaia F."/>
            <person name="Badcock K."/>
            <person name="Basham D."/>
            <person name="Brown D."/>
            <person name="Chillingworth T."/>
            <person name="Connor R."/>
            <person name="Davies R.M."/>
            <person name="Devlin K."/>
            <person name="Feltwell T."/>
            <person name="Gentles S."/>
            <person name="Hamlin N."/>
            <person name="Holroyd S."/>
            <person name="Hornsby T."/>
            <person name="Jagels K."/>
            <person name="Krogh A."/>
            <person name="McLean J."/>
            <person name="Moule S."/>
            <person name="Murphy L.D."/>
            <person name="Oliver S."/>
            <person name="Osborne J."/>
            <person name="Quail M.A."/>
            <person name="Rajandream M.A."/>
            <person name="Rogers J."/>
            <person name="Rutter S."/>
            <person name="Seeger K."/>
            <person name="Skelton S."/>
            <person name="Squares S."/>
            <person name="Squares R."/>
            <person name="Sulston J.E."/>
            <person name="Taylor K."/>
            <person name="Whitehead S."/>
            <person name="Barrell B.G."/>
        </authorList>
    </citation>
    <scope>NUCLEOTIDE SEQUENCE [LARGE SCALE GENOMIC DNA]</scope>
    <source>
        <strain>ATCC 25618 / H37Rv</strain>
    </source>
</reference>
<reference key="2">
    <citation type="journal article" date="2011" name="Mol. Cell. Proteomics">
        <title>Proteogenomic analysis of Mycobacterium tuberculosis by high resolution mass spectrometry.</title>
        <authorList>
            <person name="Kelkar D.S."/>
            <person name="Kumar D."/>
            <person name="Kumar P."/>
            <person name="Balakrishnan L."/>
            <person name="Muthusamy B."/>
            <person name="Yadav A.K."/>
            <person name="Shrivastava P."/>
            <person name="Marimuthu A."/>
            <person name="Anand S."/>
            <person name="Sundaram H."/>
            <person name="Kingsbury R."/>
            <person name="Harsha H.C."/>
            <person name="Nair B."/>
            <person name="Prasad T.S."/>
            <person name="Chauhan D.S."/>
            <person name="Katoch K."/>
            <person name="Katoch V.M."/>
            <person name="Kumar P."/>
            <person name="Chaerkady R."/>
            <person name="Ramachandran S."/>
            <person name="Dash D."/>
            <person name="Pandey A."/>
        </authorList>
    </citation>
    <scope>IDENTIFICATION BY MASS SPECTROMETRY [LARGE SCALE ANALYSIS]</scope>
    <source>
        <strain>ATCC 25618 / H37Rv</strain>
    </source>
</reference>
<gene>
    <name evidence="1" type="primary">sucD</name>
    <name type="ordered locus">Rv0952</name>
    <name type="ORF">MTCY10D7.22c</name>
</gene>
<keyword id="KW-0436">Ligase</keyword>
<keyword id="KW-0547">Nucleotide-binding</keyword>
<keyword id="KW-1185">Reference proteome</keyword>
<keyword id="KW-0816">Tricarboxylic acid cycle</keyword>
<dbReference type="EC" id="6.2.1.5" evidence="1"/>
<dbReference type="EMBL" id="AL123456">
    <property type="protein sequence ID" value="CCP43700.1"/>
    <property type="molecule type" value="Genomic_DNA"/>
</dbReference>
<dbReference type="PIR" id="F70716">
    <property type="entry name" value="F70716"/>
</dbReference>
<dbReference type="RefSeq" id="NP_215467.1">
    <property type="nucleotide sequence ID" value="NC_000962.3"/>
</dbReference>
<dbReference type="RefSeq" id="WP_003900240.1">
    <property type="nucleotide sequence ID" value="NC_000962.3"/>
</dbReference>
<dbReference type="SMR" id="P9WGC7"/>
<dbReference type="FunCoup" id="P9WGC7">
    <property type="interactions" value="508"/>
</dbReference>
<dbReference type="STRING" id="83332.Rv0952"/>
<dbReference type="PaxDb" id="83332-Rv0952"/>
<dbReference type="DNASU" id="885426"/>
<dbReference type="GeneID" id="885426"/>
<dbReference type="KEGG" id="mtu:Rv0952"/>
<dbReference type="KEGG" id="mtv:RVBD_0952"/>
<dbReference type="PATRIC" id="fig|83332.111.peg.1056"/>
<dbReference type="TubercuList" id="Rv0952"/>
<dbReference type="eggNOG" id="COG0074">
    <property type="taxonomic scope" value="Bacteria"/>
</dbReference>
<dbReference type="InParanoid" id="P9WGC7"/>
<dbReference type="OrthoDB" id="9807196at2"/>
<dbReference type="PhylomeDB" id="P9WGC7"/>
<dbReference type="BioCyc" id="MetaCyc:G185E-5107-MONOMER"/>
<dbReference type="UniPathway" id="UPA00223">
    <property type="reaction ID" value="UER00999"/>
</dbReference>
<dbReference type="Proteomes" id="UP000001584">
    <property type="component" value="Chromosome"/>
</dbReference>
<dbReference type="GO" id="GO:0005829">
    <property type="term" value="C:cytosol"/>
    <property type="evidence" value="ECO:0007005"/>
    <property type="project" value="MTBBASE"/>
</dbReference>
<dbReference type="GO" id="GO:0009274">
    <property type="term" value="C:peptidoglycan-based cell wall"/>
    <property type="evidence" value="ECO:0007005"/>
    <property type="project" value="MTBBASE"/>
</dbReference>
<dbReference type="GO" id="GO:0005886">
    <property type="term" value="C:plasma membrane"/>
    <property type="evidence" value="ECO:0007005"/>
    <property type="project" value="MTBBASE"/>
</dbReference>
<dbReference type="GO" id="GO:0009361">
    <property type="term" value="C:succinate-CoA ligase complex (ADP-forming)"/>
    <property type="evidence" value="ECO:0000318"/>
    <property type="project" value="GO_Central"/>
</dbReference>
<dbReference type="GO" id="GO:0000166">
    <property type="term" value="F:nucleotide binding"/>
    <property type="evidence" value="ECO:0007669"/>
    <property type="project" value="UniProtKB-KW"/>
</dbReference>
<dbReference type="GO" id="GO:0004775">
    <property type="term" value="F:succinate-CoA ligase (ADP-forming) activity"/>
    <property type="evidence" value="ECO:0000318"/>
    <property type="project" value="GO_Central"/>
</dbReference>
<dbReference type="GO" id="GO:0004776">
    <property type="term" value="F:succinate-CoA ligase (GDP-forming) activity"/>
    <property type="evidence" value="ECO:0000318"/>
    <property type="project" value="GO_Central"/>
</dbReference>
<dbReference type="GO" id="GO:0006099">
    <property type="term" value="P:tricarboxylic acid cycle"/>
    <property type="evidence" value="ECO:0000318"/>
    <property type="project" value="GO_Central"/>
</dbReference>
<dbReference type="FunFam" id="3.40.50.261:FF:000006">
    <property type="entry name" value="Succinate--CoA ligase [ADP-forming] subunit alpha"/>
    <property type="match status" value="1"/>
</dbReference>
<dbReference type="FunFam" id="3.40.50.720:FF:000205">
    <property type="entry name" value="Succinate--CoA ligase [ADP-forming] subunit alpha"/>
    <property type="match status" value="1"/>
</dbReference>
<dbReference type="Gene3D" id="3.40.50.720">
    <property type="entry name" value="NAD(P)-binding Rossmann-like Domain"/>
    <property type="match status" value="1"/>
</dbReference>
<dbReference type="Gene3D" id="3.40.50.261">
    <property type="entry name" value="Succinyl-CoA synthetase domains"/>
    <property type="match status" value="1"/>
</dbReference>
<dbReference type="HAMAP" id="MF_01988">
    <property type="entry name" value="Succ_CoA_alpha"/>
    <property type="match status" value="1"/>
</dbReference>
<dbReference type="InterPro" id="IPR017440">
    <property type="entry name" value="Cit_synth/succinyl-CoA_lig_AS"/>
</dbReference>
<dbReference type="InterPro" id="IPR033847">
    <property type="entry name" value="Citrt_syn/SCS-alpha_CS"/>
</dbReference>
<dbReference type="InterPro" id="IPR003781">
    <property type="entry name" value="CoA-bd"/>
</dbReference>
<dbReference type="InterPro" id="IPR005810">
    <property type="entry name" value="CoA_lig_alpha"/>
</dbReference>
<dbReference type="InterPro" id="IPR036291">
    <property type="entry name" value="NAD(P)-bd_dom_sf"/>
</dbReference>
<dbReference type="InterPro" id="IPR005811">
    <property type="entry name" value="SUCC_ACL_C"/>
</dbReference>
<dbReference type="InterPro" id="IPR016102">
    <property type="entry name" value="Succinyl-CoA_synth-like"/>
</dbReference>
<dbReference type="NCBIfam" id="NF004230">
    <property type="entry name" value="PRK05678.1"/>
    <property type="match status" value="1"/>
</dbReference>
<dbReference type="NCBIfam" id="TIGR01019">
    <property type="entry name" value="sucCoAalpha"/>
    <property type="match status" value="1"/>
</dbReference>
<dbReference type="PANTHER" id="PTHR11117:SF2">
    <property type="entry name" value="SUCCINATE--COA LIGASE [ADP_GDP-FORMING] SUBUNIT ALPHA, MITOCHONDRIAL"/>
    <property type="match status" value="1"/>
</dbReference>
<dbReference type="PANTHER" id="PTHR11117">
    <property type="entry name" value="SUCCINYL-COA LIGASE SUBUNIT ALPHA"/>
    <property type="match status" value="1"/>
</dbReference>
<dbReference type="Pfam" id="PF02629">
    <property type="entry name" value="CoA_binding"/>
    <property type="match status" value="1"/>
</dbReference>
<dbReference type="Pfam" id="PF00549">
    <property type="entry name" value="Ligase_CoA"/>
    <property type="match status" value="1"/>
</dbReference>
<dbReference type="PIRSF" id="PIRSF001553">
    <property type="entry name" value="SucCS_alpha"/>
    <property type="match status" value="1"/>
</dbReference>
<dbReference type="PRINTS" id="PR01798">
    <property type="entry name" value="SCOASYNTHASE"/>
</dbReference>
<dbReference type="SMART" id="SM00881">
    <property type="entry name" value="CoA_binding"/>
    <property type="match status" value="1"/>
</dbReference>
<dbReference type="SUPFAM" id="SSF51735">
    <property type="entry name" value="NAD(P)-binding Rossmann-fold domains"/>
    <property type="match status" value="1"/>
</dbReference>
<dbReference type="SUPFAM" id="SSF52210">
    <property type="entry name" value="Succinyl-CoA synthetase domains"/>
    <property type="match status" value="1"/>
</dbReference>
<dbReference type="PROSITE" id="PS01216">
    <property type="entry name" value="SUCCINYL_COA_LIG_1"/>
    <property type="match status" value="1"/>
</dbReference>
<dbReference type="PROSITE" id="PS00399">
    <property type="entry name" value="SUCCINYL_COA_LIG_2"/>
    <property type="match status" value="1"/>
</dbReference>
<sequence>MTHMSIFLSRDNKVIVQGITGSEATVHTARMLRAGTQIVGGVNARKAGTTVTHEDKGGRLIKLPVFGSVAEAMEKTGADVSIIFVPPTFAKDAIIEAIDAEIPLLVVITEGIPVQDTAYAWAYNLEAGHKTRIIGPNCPGIISPGQSLAGITPANITGPGPIGLVSKSGTLTYQMMFELRDLGFSTAIGIGGDPVIGTTHIDAIEAFERDPDTKLIVMIGEIGGDAEERAADFIKTNVSKPVVGYVAGFTAPEGKTMGHAGAIVSGSSGTAAAKQEALEAAGVKVGKTPSATAALAREILLSL</sequence>